<evidence type="ECO:0000250" key="1"/>
<evidence type="ECO:0000255" key="2">
    <source>
        <dbReference type="PROSITE-ProRule" id="PRU00406"/>
    </source>
</evidence>
<evidence type="ECO:0000256" key="3">
    <source>
        <dbReference type="SAM" id="MobiDB-lite"/>
    </source>
</evidence>
<evidence type="ECO:0000269" key="4">
    <source>
    </source>
</evidence>
<evidence type="ECO:0000269" key="5">
    <source>
    </source>
</evidence>
<evidence type="ECO:0000305" key="6"/>
<accession>E7F568</accession>
<accession>I1X3U9</accession>
<dbReference type="EMBL" id="BX537113">
    <property type="status" value="NOT_ANNOTATED_CDS"/>
    <property type="molecule type" value="Genomic_DNA"/>
</dbReference>
<dbReference type="EMBL" id="JQ776648">
    <property type="protein sequence ID" value="AFI74363.1"/>
    <property type="molecule type" value="mRNA"/>
</dbReference>
<dbReference type="SMR" id="E7F568"/>
<dbReference type="FunCoup" id="E7F568">
    <property type="interactions" value="800"/>
</dbReference>
<dbReference type="STRING" id="7955.ENSDARP00000018030"/>
<dbReference type="PaxDb" id="7955-ENSDARP00000108248"/>
<dbReference type="AGR" id="ZFIN:ZDB-GENE-091020-11"/>
<dbReference type="ZFIN" id="ZDB-GENE-091020-11">
    <property type="gene designation" value="cobl"/>
</dbReference>
<dbReference type="eggNOG" id="ENOG502QTAY">
    <property type="taxonomic scope" value="Eukaryota"/>
</dbReference>
<dbReference type="InParanoid" id="E7F568"/>
<dbReference type="TreeFam" id="TF333490"/>
<dbReference type="PRO" id="PR:E7F568"/>
<dbReference type="Proteomes" id="UP000000437">
    <property type="component" value="Unplaced"/>
</dbReference>
<dbReference type="GO" id="GO:0005856">
    <property type="term" value="C:cytoskeleton"/>
    <property type="evidence" value="ECO:0007669"/>
    <property type="project" value="UniProtKB-SubCell"/>
</dbReference>
<dbReference type="GO" id="GO:0005829">
    <property type="term" value="C:cytosol"/>
    <property type="evidence" value="ECO:0007669"/>
    <property type="project" value="UniProtKB-SubCell"/>
</dbReference>
<dbReference type="GO" id="GO:0005886">
    <property type="term" value="C:plasma membrane"/>
    <property type="evidence" value="ECO:0007669"/>
    <property type="project" value="UniProtKB-SubCell"/>
</dbReference>
<dbReference type="GO" id="GO:0001726">
    <property type="term" value="C:ruffle"/>
    <property type="evidence" value="ECO:0007669"/>
    <property type="project" value="UniProtKB-SubCell"/>
</dbReference>
<dbReference type="GO" id="GO:0003785">
    <property type="term" value="F:actin monomer binding"/>
    <property type="evidence" value="ECO:0007669"/>
    <property type="project" value="InterPro"/>
</dbReference>
<dbReference type="GO" id="GO:0060088">
    <property type="term" value="P:auditory receptor cell stereocilium organization"/>
    <property type="evidence" value="ECO:0000315"/>
    <property type="project" value="ZFIN"/>
</dbReference>
<dbReference type="GO" id="GO:0060271">
    <property type="term" value="P:cilium assembly"/>
    <property type="evidence" value="ECO:0000315"/>
    <property type="project" value="ZFIN"/>
</dbReference>
<dbReference type="GO" id="GO:0003146">
    <property type="term" value="P:heart jogging"/>
    <property type="evidence" value="ECO:0000315"/>
    <property type="project" value="ZFIN"/>
</dbReference>
<dbReference type="GO" id="GO:0001947">
    <property type="term" value="P:heart looping"/>
    <property type="evidence" value="ECO:0000315"/>
    <property type="project" value="ZFIN"/>
</dbReference>
<dbReference type="CDD" id="cd21799">
    <property type="entry name" value="WH2_Wa_Cobl"/>
    <property type="match status" value="1"/>
</dbReference>
<dbReference type="CDD" id="cd21800">
    <property type="entry name" value="WH2_Wb_Cobl"/>
    <property type="match status" value="1"/>
</dbReference>
<dbReference type="CDD" id="cd21801">
    <property type="entry name" value="WH2_Wc_Cobl"/>
    <property type="match status" value="1"/>
</dbReference>
<dbReference type="Gene3D" id="3.10.20.90">
    <property type="entry name" value="Phosphatidylinositol 3-kinase Catalytic Subunit, Chain A, domain 1"/>
    <property type="match status" value="1"/>
</dbReference>
<dbReference type="InterPro" id="IPR039895">
    <property type="entry name" value="COBL-like"/>
</dbReference>
<dbReference type="InterPro" id="IPR019025">
    <property type="entry name" value="Cordon-bleu_ubiquitin_domain"/>
</dbReference>
<dbReference type="InterPro" id="IPR003124">
    <property type="entry name" value="WH2_dom"/>
</dbReference>
<dbReference type="PANTHER" id="PTHR47008">
    <property type="entry name" value="PROTEIN CORDON-BLEU"/>
    <property type="match status" value="1"/>
</dbReference>
<dbReference type="PANTHER" id="PTHR47008:SF1">
    <property type="entry name" value="PROTEIN CORDON-BLEU"/>
    <property type="match status" value="1"/>
</dbReference>
<dbReference type="Pfam" id="PF09469">
    <property type="entry name" value="Cobl"/>
    <property type="match status" value="1"/>
</dbReference>
<dbReference type="Pfam" id="PF02205">
    <property type="entry name" value="WH2"/>
    <property type="match status" value="2"/>
</dbReference>
<dbReference type="SMART" id="SM00246">
    <property type="entry name" value="WH2"/>
    <property type="match status" value="3"/>
</dbReference>
<dbReference type="PROSITE" id="PS51082">
    <property type="entry name" value="WH2"/>
    <property type="match status" value="3"/>
</dbReference>
<comment type="function">
    <text evidence="1 4 5">Plays an important role in the reorganization of the actin cytoskeleton. Binds to and sequesters actin monomers (G actin). Nucleates actin polymerization by assembling three actin monomers in cross-filament orientation and thereby promotes growth of actin filaments at the barbed end. Can also mediate actin depolymerization at barbed ends and severing of actin filaments. Promotes formation of cell ruffles. Regulates neuron morphogenesis and increases branching of axons and dendrites (By similarity). Required for normal embryonic development, including normal development of laterality, normal body size and shape, as well as normal brain, heart and kidney development. Required for normal development of stereocilia and kinocilia in sensory hair cells of neuromasts in the posterior lateral line organ, and thus also for balance keeping and normal swimming behavior.</text>
</comment>
<comment type="subunit">
    <text>Interacts with pacsin1.</text>
</comment>
<comment type="subcellular location">
    <subcellularLocation>
        <location>Cell membrane</location>
        <topology>Peripheral membrane protein</topology>
        <orientation>Cytoplasmic side</orientation>
    </subcellularLocation>
    <subcellularLocation>
        <location>Cytoplasm</location>
        <location>Cytoskeleton</location>
    </subcellularLocation>
    <subcellularLocation>
        <location evidence="1">Cell projection</location>
        <location evidence="1">Ruffle</location>
    </subcellularLocation>
    <subcellularLocation>
        <location>Cytoplasm</location>
    </subcellularLocation>
    <subcellularLocation>
        <location>Cytoplasm</location>
        <location>Cytosol</location>
    </subcellularLocation>
    <text evidence="1">Detected throughout the neuron cell body, as well as in axons and dendrites (By similarity). Colocalizes with the actin cytoskeleton. Recruited to the cell membrane via interaction with pacsin1. Detected at the apical surface of cells at the basis of forming cilia, but not in the cilia themselves.</text>
</comment>
<comment type="developmental stage">
    <text evidence="4 5">Detected in early zygote. Detected in neural keel and in Kupffer's vesicle at the eight somite stage. Detected in developing pronephric tubules, the otic vesicle and nasal placodes at 24 hpf. At 24 to 72 hpf, detected in ciliated epithelium cells of the neural tube, nasal pits and pronephric tubules. Detected in embryonic neuronal tissues, including forebrain, hindbrain, spinal cord and retina.</text>
</comment>
<organism>
    <name type="scientific">Danio rerio</name>
    <name type="common">Zebrafish</name>
    <name type="synonym">Brachydanio rerio</name>
    <dbReference type="NCBI Taxonomy" id="7955"/>
    <lineage>
        <taxon>Eukaryota</taxon>
        <taxon>Metazoa</taxon>
        <taxon>Chordata</taxon>
        <taxon>Craniata</taxon>
        <taxon>Vertebrata</taxon>
        <taxon>Euteleostomi</taxon>
        <taxon>Actinopterygii</taxon>
        <taxon>Neopterygii</taxon>
        <taxon>Teleostei</taxon>
        <taxon>Ostariophysi</taxon>
        <taxon>Cypriniformes</taxon>
        <taxon>Danionidae</taxon>
        <taxon>Danioninae</taxon>
        <taxon>Danio</taxon>
    </lineage>
</organism>
<proteinExistence type="evidence at protein level"/>
<keyword id="KW-0009">Actin-binding</keyword>
<keyword id="KW-1003">Cell membrane</keyword>
<keyword id="KW-0966">Cell projection</keyword>
<keyword id="KW-0963">Cytoplasm</keyword>
<keyword id="KW-0206">Cytoskeleton</keyword>
<keyword id="KW-0472">Membrane</keyword>
<keyword id="KW-1185">Reference proteome</keyword>
<keyword id="KW-0677">Repeat</keyword>
<protein>
    <recommendedName>
        <fullName>Protein cordon-bleu</fullName>
    </recommendedName>
</protein>
<reference key="1">
    <citation type="journal article" date="2013" name="Nature">
        <title>The zebrafish reference genome sequence and its relationship to the human genome.</title>
        <authorList>
            <person name="Howe K."/>
            <person name="Clark M.D."/>
            <person name="Torroja C.F."/>
            <person name="Torrance J."/>
            <person name="Berthelot C."/>
            <person name="Muffato M."/>
            <person name="Collins J.E."/>
            <person name="Humphray S."/>
            <person name="McLaren K."/>
            <person name="Matthews L."/>
            <person name="McLaren S."/>
            <person name="Sealy I."/>
            <person name="Caccamo M."/>
            <person name="Churcher C."/>
            <person name="Scott C."/>
            <person name="Barrett J.C."/>
            <person name="Koch R."/>
            <person name="Rauch G.J."/>
            <person name="White S."/>
            <person name="Chow W."/>
            <person name="Kilian B."/>
            <person name="Quintais L.T."/>
            <person name="Guerra-Assuncao J.A."/>
            <person name="Zhou Y."/>
            <person name="Gu Y."/>
            <person name="Yen J."/>
            <person name="Vogel J.H."/>
            <person name="Eyre T."/>
            <person name="Redmond S."/>
            <person name="Banerjee R."/>
            <person name="Chi J."/>
            <person name="Fu B."/>
            <person name="Langley E."/>
            <person name="Maguire S.F."/>
            <person name="Laird G.K."/>
            <person name="Lloyd D."/>
            <person name="Kenyon E."/>
            <person name="Donaldson S."/>
            <person name="Sehra H."/>
            <person name="Almeida-King J."/>
            <person name="Loveland J."/>
            <person name="Trevanion S."/>
            <person name="Jones M."/>
            <person name="Quail M."/>
            <person name="Willey D."/>
            <person name="Hunt A."/>
            <person name="Burton J."/>
            <person name="Sims S."/>
            <person name="McLay K."/>
            <person name="Plumb B."/>
            <person name="Davis J."/>
            <person name="Clee C."/>
            <person name="Oliver K."/>
            <person name="Clark R."/>
            <person name="Riddle C."/>
            <person name="Elliot D."/>
            <person name="Threadgold G."/>
            <person name="Harden G."/>
            <person name="Ware D."/>
            <person name="Begum S."/>
            <person name="Mortimore B."/>
            <person name="Kerry G."/>
            <person name="Heath P."/>
            <person name="Phillimore B."/>
            <person name="Tracey A."/>
            <person name="Corby N."/>
            <person name="Dunn M."/>
            <person name="Johnson C."/>
            <person name="Wood J."/>
            <person name="Clark S."/>
            <person name="Pelan S."/>
            <person name="Griffiths G."/>
            <person name="Smith M."/>
            <person name="Glithero R."/>
            <person name="Howden P."/>
            <person name="Barker N."/>
            <person name="Lloyd C."/>
            <person name="Stevens C."/>
            <person name="Harley J."/>
            <person name="Holt K."/>
            <person name="Panagiotidis G."/>
            <person name="Lovell J."/>
            <person name="Beasley H."/>
            <person name="Henderson C."/>
            <person name="Gordon D."/>
            <person name="Auger K."/>
            <person name="Wright D."/>
            <person name="Collins J."/>
            <person name="Raisen C."/>
            <person name="Dyer L."/>
            <person name="Leung K."/>
            <person name="Robertson L."/>
            <person name="Ambridge K."/>
            <person name="Leongamornlert D."/>
            <person name="McGuire S."/>
            <person name="Gilderthorp R."/>
            <person name="Griffiths C."/>
            <person name="Manthravadi D."/>
            <person name="Nichol S."/>
            <person name="Barker G."/>
            <person name="Whitehead S."/>
            <person name="Kay M."/>
            <person name="Brown J."/>
            <person name="Murnane C."/>
            <person name="Gray E."/>
            <person name="Humphries M."/>
            <person name="Sycamore N."/>
            <person name="Barker D."/>
            <person name="Saunders D."/>
            <person name="Wallis J."/>
            <person name="Babbage A."/>
            <person name="Hammond S."/>
            <person name="Mashreghi-Mohammadi M."/>
            <person name="Barr L."/>
            <person name="Martin S."/>
            <person name="Wray P."/>
            <person name="Ellington A."/>
            <person name="Matthews N."/>
            <person name="Ellwood M."/>
            <person name="Woodmansey R."/>
            <person name="Clark G."/>
            <person name="Cooper J."/>
            <person name="Tromans A."/>
            <person name="Grafham D."/>
            <person name="Skuce C."/>
            <person name="Pandian R."/>
            <person name="Andrews R."/>
            <person name="Harrison E."/>
            <person name="Kimberley A."/>
            <person name="Garnett J."/>
            <person name="Fosker N."/>
            <person name="Hall R."/>
            <person name="Garner P."/>
            <person name="Kelly D."/>
            <person name="Bird C."/>
            <person name="Palmer S."/>
            <person name="Gehring I."/>
            <person name="Berger A."/>
            <person name="Dooley C.M."/>
            <person name="Ersan-Urun Z."/>
            <person name="Eser C."/>
            <person name="Geiger H."/>
            <person name="Geisler M."/>
            <person name="Karotki L."/>
            <person name="Kirn A."/>
            <person name="Konantz J."/>
            <person name="Konantz M."/>
            <person name="Oberlander M."/>
            <person name="Rudolph-Geiger S."/>
            <person name="Teucke M."/>
            <person name="Lanz C."/>
            <person name="Raddatz G."/>
            <person name="Osoegawa K."/>
            <person name="Zhu B."/>
            <person name="Rapp A."/>
            <person name="Widaa S."/>
            <person name="Langford C."/>
            <person name="Yang F."/>
            <person name="Schuster S.C."/>
            <person name="Carter N.P."/>
            <person name="Harrow J."/>
            <person name="Ning Z."/>
            <person name="Herrero J."/>
            <person name="Searle S.M."/>
            <person name="Enright A."/>
            <person name="Geisler R."/>
            <person name="Plasterk R.H."/>
            <person name="Lee C."/>
            <person name="Westerfield M."/>
            <person name="de Jong P.J."/>
            <person name="Zon L.I."/>
            <person name="Postlethwait J.H."/>
            <person name="Nusslein-Volhard C."/>
            <person name="Hubbard T.J."/>
            <person name="Roest Crollius H."/>
            <person name="Rogers J."/>
            <person name="Stemple D.L."/>
        </authorList>
    </citation>
    <scope>NUCLEOTIDE SEQUENCE [LARGE SCALE GENOMIC DNA]</scope>
    <source>
        <strain>Tuebingen</strain>
    </source>
</reference>
<reference key="2">
    <citation type="journal article" date="2013" name="J. Cell Sci.">
        <title>Ciliated sensory hair cell formation and function require the F-BAR protein syndapin I and the WH2 domain-based actin nucleator Cobl.</title>
        <authorList>
            <person name="Schuler S."/>
            <person name="Hauptmann J."/>
            <person name="Perner B."/>
            <person name="Kessels M.M."/>
            <person name="Englert C."/>
            <person name="Qualmann B."/>
        </authorList>
    </citation>
    <scope>NUCLEOTIDE SEQUENCE [MRNA] OF 16-1327</scope>
    <scope>FUNCTION</scope>
    <scope>SUBCELLULAR LOCATION</scope>
    <scope>INTERACTION WITH PACSIN1</scope>
    <scope>DEVELOPMENTAL STAGE</scope>
</reference>
<reference key="3">
    <citation type="journal article" date="2011" name="Dev. Biol.">
        <title>The actin nucleator Cordon-bleu is required for development of motile cilia in zebrafish.</title>
        <authorList>
            <person name="Ravanelli A.M."/>
            <person name="Klingensmith J."/>
        </authorList>
    </citation>
    <scope>FUNCTION</scope>
    <scope>SUBCELLULAR LOCATION</scope>
    <scope>DEVELOPMENTAL STAGE</scope>
</reference>
<feature type="chain" id="PRO_0000422093" description="Protein cordon-bleu">
    <location>
        <begin position="1"/>
        <end position="1343"/>
    </location>
</feature>
<feature type="domain" description="WH2 1" evidence="2">
    <location>
        <begin position="1167"/>
        <end position="1187"/>
    </location>
</feature>
<feature type="domain" description="WH2 2" evidence="2">
    <location>
        <begin position="1207"/>
        <end position="1227"/>
    </location>
</feature>
<feature type="domain" description="WH2 3" evidence="2">
    <location>
        <begin position="1297"/>
        <end position="1317"/>
    </location>
</feature>
<feature type="region of interest" description="Disordered" evidence="3">
    <location>
        <begin position="1"/>
        <end position="51"/>
    </location>
</feature>
<feature type="region of interest" description="Disordered" evidence="3">
    <location>
        <begin position="301"/>
        <end position="479"/>
    </location>
</feature>
<feature type="region of interest" description="Disordered" evidence="3">
    <location>
        <begin position="522"/>
        <end position="613"/>
    </location>
</feature>
<feature type="region of interest" description="Disordered" evidence="3">
    <location>
        <begin position="733"/>
        <end position="808"/>
    </location>
</feature>
<feature type="region of interest" description="Disordered" evidence="3">
    <location>
        <begin position="1056"/>
        <end position="1077"/>
    </location>
</feature>
<feature type="region of interest" description="Disordered" evidence="3">
    <location>
        <begin position="1105"/>
        <end position="1148"/>
    </location>
</feature>
<feature type="region of interest" description="Disordered" evidence="3">
    <location>
        <begin position="1246"/>
        <end position="1297"/>
    </location>
</feature>
<feature type="short sequence motif" description="KKRRAP 1">
    <location>
        <begin position="305"/>
        <end position="310"/>
    </location>
</feature>
<feature type="short sequence motif" description="KKRRAP 2">
    <location>
        <begin position="338"/>
        <end position="343"/>
    </location>
</feature>
<feature type="compositionally biased region" description="Pro residues" evidence="3">
    <location>
        <begin position="20"/>
        <end position="30"/>
    </location>
</feature>
<feature type="compositionally biased region" description="Polar residues" evidence="3">
    <location>
        <begin position="324"/>
        <end position="335"/>
    </location>
</feature>
<feature type="compositionally biased region" description="Pro residues" evidence="3">
    <location>
        <begin position="343"/>
        <end position="354"/>
    </location>
</feature>
<feature type="compositionally biased region" description="Basic and acidic residues" evidence="3">
    <location>
        <begin position="390"/>
        <end position="400"/>
    </location>
</feature>
<feature type="compositionally biased region" description="Low complexity" evidence="3">
    <location>
        <begin position="406"/>
        <end position="422"/>
    </location>
</feature>
<feature type="compositionally biased region" description="Basic and acidic residues" evidence="3">
    <location>
        <begin position="445"/>
        <end position="460"/>
    </location>
</feature>
<feature type="compositionally biased region" description="Polar residues" evidence="3">
    <location>
        <begin position="552"/>
        <end position="573"/>
    </location>
</feature>
<feature type="compositionally biased region" description="Basic and acidic residues" evidence="3">
    <location>
        <begin position="746"/>
        <end position="757"/>
    </location>
</feature>
<feature type="compositionally biased region" description="Polar residues" evidence="3">
    <location>
        <begin position="773"/>
        <end position="789"/>
    </location>
</feature>
<feature type="compositionally biased region" description="Polar residues" evidence="3">
    <location>
        <begin position="1105"/>
        <end position="1122"/>
    </location>
</feature>
<feature type="compositionally biased region" description="Basic and acidic residues" evidence="3">
    <location>
        <begin position="1128"/>
        <end position="1137"/>
    </location>
</feature>
<feature type="compositionally biased region" description="Pro residues" evidence="3">
    <location>
        <begin position="1261"/>
        <end position="1292"/>
    </location>
</feature>
<feature type="sequence conflict" description="In Ref. 2; AFI74363." evidence="6" ref="2">
    <original>C</original>
    <variation>S</variation>
    <location>
        <position position="50"/>
    </location>
</feature>
<feature type="sequence conflict" description="In Ref. 2; AFI74363." evidence="6" ref="2">
    <original>Y</original>
    <variation>N</variation>
    <location>
        <position position="58"/>
    </location>
</feature>
<feature type="sequence conflict" description="In Ref. 2; AFI74363." evidence="6" ref="2">
    <location>
        <begin position="225"/>
        <end position="239"/>
    </location>
</feature>
<feature type="sequence conflict" description="In Ref. 2; AFI74363." evidence="6" ref="2">
    <original>T</original>
    <variation>I</variation>
    <location>
        <position position="360"/>
    </location>
</feature>
<feature type="sequence conflict" description="In Ref. 2; AFI74363." evidence="6" ref="2">
    <original>S</original>
    <variation>A</variation>
    <location>
        <position position="463"/>
    </location>
</feature>
<feature type="sequence conflict" description="In Ref. 2; AFI74363." evidence="6" ref="2">
    <location>
        <position position="595"/>
    </location>
</feature>
<gene>
    <name type="primary">cobl</name>
</gene>
<sequence>MNLGDATTRPPVGRRMKAQAPPPPRPPQPAPRRIFRNAVPDGGGSSGGDCKENMLRSYVDLHISLPTGYQTTINVDGRKALMDLLVDLCSQYHLNPAYHTLELLSPDAQPVSFKPNALLGALDVSCALIKERVLEDRVIRKPPPKVPEKTVRLVVNYHRSQKAVVRVNPLAPLQTLVPVICQKCEFDPAHVLLFKDNINHQQLDLDKSLSDLGIRELYVLDQTLVLQPKMASTPALNYSAESLRSNSLSGSEKKGLLGFLKFNRRKSKGMSVVASGPCVEARPSTLGQSQSVMNISKMSPKVELKKRRAPAPPPAPTQTLPPTSQISLGSPSSHNLLKKRKAPAPPPTPPPSTPEPDISTYVPTATVQEHYIPASVERTPRASTPADDSDLSHSIEDSEPARSICSSSSGDDAAAVGSSSSSLAEEPVTHRADVIAPFTTSTPEPEPKPEYEPELKKEASPRSTPELEPGPRPEVPAAEDLEVEMELKMEETENNRHSGIAWLHSAHESVLERRVQQEVETVSVASSESFADHGYAASEDMAEESGPVSPSERMQSVSPMDIMSLNSDSTLPVKQSKESSSDSDEGCATWGSRQSSGHIQDGQKSIKRQNGYEEDPEITAQIHLTLADLDANLADLNHSDGASVFVDDEIPVSIVDMDIPVTAIDEVLDDDQCSASECESVLLRSTQSISSKPCTPCGVIQNKNNNACLTEEKHRSPFPDIEKQLQTATLTVIDKPTIQSPTSKKPSQDAKITDNMEQKTTFNSEAKSKSETVELTSQKDTVLQKSQSFVRPDVQSVQKERTSSTRVLPTQGKITLSSFSRFGMKTFTVIPPKPAVSQTKPAGSLVTGAIKIDEQGNMVTQRQISSGPEKNNTPSVDTTRADKTPLVKAKAFWSTTEKQEKLTTAKTEPIVNNGDTDVFKASAVTGSFKLSPPEETHKEVIIVERKPISGVASKPSFSENHAEKRDLSFLIPSRRTSSQYVASVIAKNNKNSSIPKTKIDTTPAPLSISGVQNPVNQLLNNEVKPTSIHKPAVTVKPTENPVPSFRPKCLQSYVAEKPTSSERISTLHGGDKTKSLDSQPLSIKIQPFPHVSAHIKSFSEEATSINNFPDTSSARQTPTDTTHPPLAKKPELHKSEIPSEPNQGNVFGPVKKFKPVIFKPVQQETSIHSSLMEAIQSGEGIERLRKVSDLPTSCTVKKPSYNDPENERSALLSAIRASSTSAKLKKTKSVASKELEQLRKVEEDRNVHTEVISPRPTSPDFVPPLPPSFSPPPPPPPPLAPAKPPVVLPPGGNPEAAREALLEAIRSGSGAQQLRKVPVTQTRRQVNGRLGTIQATSPLSYGH</sequence>
<name>COBL_DANRE</name>